<sequence>MSDTRETLAELEQRDAFIGRHIGPDEAEKTAMLNALGVADMETLISKTVPETIRIKEGLELDGPCTEAQALAELKAFAERNKVFKTYIGMGYYNTLTPTVILRNVLENPAWYTAYTPYQPEISQGRLEALLNFQTMIGDLTGMEMANASLLDEGTAAAEAMTMCRRVNGKNKSNVFFVAEDCLPQTIEVVKGRAEPLGIEVVVGDPQKDLQNHDYFAVLLQYPGVNGDVRDYRELIKTAHESNALAIMAADILSLTLLTPPGELGADIAIGNSQRFGVPLFFGGPHAAYIATKDEYKRSLPGRLVGVSVDANGDKAYRLALQTREQHIRRQNATSNICTAQALLAITASMYGAYHGPEGLKRIARRVHRLTTILAEGLKQAGRSVNTAHFFDTVSVATGGDTDAVYQAALQQKINLRRIDDNTLGVSLDETTTREDVAALLHVFASGKPVADVATLDSSAKDAIPAELRRQSAFMTHTVFNRYHSETEMLRYLRRLSDKDLALDRTMIPLGSCTMKLNATTEMTPVSWDGFCAIHPFAPLDQTEGYRALIADLERMLSAATGYAAFSLQPNAGSQGEYAGLLAIRAYHHSRGEGDRDVCLIPNSAHGTNPASAQMVGMKVVAVKCDDNGNVDLNDLRLKAEQHSAKLAALMATYPSTHGVFEEGIREVCSIVHQHGGQVYIDGANLNAMVGLCKPGQFGGDVSHLNLHKTFCIPHGGGGPGVGPIGVAAHLAPFLPGHSAMGETADKAIAPISAAPWGSAGILPISWTYIRMMGGEGLTEATKSAILNANYIAKRLEPHYPVLYTGSQGFVAHECIIDVRPFKDSCGVTVDDIAKRLIDFGFHAPTMSFPVPGTLMIEPTESESLAELDRFCDAMIAIREEIRAIENGEYDVDHSPLHHAPHTAADLVGDWDRPYSRERGVYPLKALKADKYWSPVGRIDNVYGDRNLVCACPPMTEYED</sequence>
<feature type="chain" id="PRO_1000083208" description="Glycine dehydrogenase (decarboxylating)">
    <location>
        <begin position="1"/>
        <end position="960"/>
    </location>
</feature>
<feature type="modified residue" description="N6-(pyridoxal phosphate)lysine" evidence="1">
    <location>
        <position position="709"/>
    </location>
</feature>
<proteinExistence type="inferred from homology"/>
<dbReference type="EC" id="1.4.4.2" evidence="1"/>
<dbReference type="EMBL" id="CP000155">
    <property type="protein sequence ID" value="ABC30588.1"/>
    <property type="molecule type" value="Genomic_DNA"/>
</dbReference>
<dbReference type="RefSeq" id="WP_011397655.1">
    <property type="nucleotide sequence ID" value="NC_007645.1"/>
</dbReference>
<dbReference type="SMR" id="Q2SFI6"/>
<dbReference type="STRING" id="349521.HCH_03861"/>
<dbReference type="KEGG" id="hch:HCH_03861"/>
<dbReference type="eggNOG" id="COG0403">
    <property type="taxonomic scope" value="Bacteria"/>
</dbReference>
<dbReference type="eggNOG" id="COG1003">
    <property type="taxonomic scope" value="Bacteria"/>
</dbReference>
<dbReference type="HOGENOM" id="CLU_004620_3_2_6"/>
<dbReference type="OrthoDB" id="9801272at2"/>
<dbReference type="Proteomes" id="UP000000238">
    <property type="component" value="Chromosome"/>
</dbReference>
<dbReference type="GO" id="GO:0005829">
    <property type="term" value="C:cytosol"/>
    <property type="evidence" value="ECO:0007669"/>
    <property type="project" value="TreeGrafter"/>
</dbReference>
<dbReference type="GO" id="GO:0005960">
    <property type="term" value="C:glycine cleavage complex"/>
    <property type="evidence" value="ECO:0007669"/>
    <property type="project" value="TreeGrafter"/>
</dbReference>
<dbReference type="GO" id="GO:0016594">
    <property type="term" value="F:glycine binding"/>
    <property type="evidence" value="ECO:0007669"/>
    <property type="project" value="TreeGrafter"/>
</dbReference>
<dbReference type="GO" id="GO:0004375">
    <property type="term" value="F:glycine dehydrogenase (decarboxylating) activity"/>
    <property type="evidence" value="ECO:0007669"/>
    <property type="project" value="UniProtKB-EC"/>
</dbReference>
<dbReference type="GO" id="GO:0030170">
    <property type="term" value="F:pyridoxal phosphate binding"/>
    <property type="evidence" value="ECO:0007669"/>
    <property type="project" value="TreeGrafter"/>
</dbReference>
<dbReference type="GO" id="GO:0019464">
    <property type="term" value="P:glycine decarboxylation via glycine cleavage system"/>
    <property type="evidence" value="ECO:0007669"/>
    <property type="project" value="UniProtKB-UniRule"/>
</dbReference>
<dbReference type="CDD" id="cd00613">
    <property type="entry name" value="GDC-P"/>
    <property type="match status" value="2"/>
</dbReference>
<dbReference type="FunFam" id="3.90.1150.10:FF:000025">
    <property type="entry name" value="Glycine cleavage system P protein"/>
    <property type="match status" value="1"/>
</dbReference>
<dbReference type="FunFam" id="3.40.640.10:FF:000005">
    <property type="entry name" value="Glycine dehydrogenase (decarboxylating), mitochondrial"/>
    <property type="match status" value="1"/>
</dbReference>
<dbReference type="FunFam" id="3.90.1150.10:FF:000007">
    <property type="entry name" value="Glycine dehydrogenase (decarboxylating), mitochondrial"/>
    <property type="match status" value="1"/>
</dbReference>
<dbReference type="FunFam" id="3.40.640.10:FF:000007">
    <property type="entry name" value="glycine dehydrogenase (Decarboxylating), mitochondrial"/>
    <property type="match status" value="1"/>
</dbReference>
<dbReference type="Gene3D" id="3.90.1150.10">
    <property type="entry name" value="Aspartate Aminotransferase, domain 1"/>
    <property type="match status" value="2"/>
</dbReference>
<dbReference type="Gene3D" id="3.40.640.10">
    <property type="entry name" value="Type I PLP-dependent aspartate aminotransferase-like (Major domain)"/>
    <property type="match status" value="2"/>
</dbReference>
<dbReference type="HAMAP" id="MF_00711">
    <property type="entry name" value="GcvP"/>
    <property type="match status" value="1"/>
</dbReference>
<dbReference type="InterPro" id="IPR003437">
    <property type="entry name" value="GcvP"/>
</dbReference>
<dbReference type="InterPro" id="IPR049316">
    <property type="entry name" value="GDC-P_C"/>
</dbReference>
<dbReference type="InterPro" id="IPR049315">
    <property type="entry name" value="GDC-P_N"/>
</dbReference>
<dbReference type="InterPro" id="IPR020581">
    <property type="entry name" value="GDC_P"/>
</dbReference>
<dbReference type="InterPro" id="IPR015424">
    <property type="entry name" value="PyrdxlP-dep_Trfase"/>
</dbReference>
<dbReference type="InterPro" id="IPR015421">
    <property type="entry name" value="PyrdxlP-dep_Trfase_major"/>
</dbReference>
<dbReference type="InterPro" id="IPR015422">
    <property type="entry name" value="PyrdxlP-dep_Trfase_small"/>
</dbReference>
<dbReference type="NCBIfam" id="TIGR00461">
    <property type="entry name" value="gcvP"/>
    <property type="match status" value="1"/>
</dbReference>
<dbReference type="NCBIfam" id="NF001696">
    <property type="entry name" value="PRK00451.1"/>
    <property type="match status" value="1"/>
</dbReference>
<dbReference type="NCBIfam" id="NF003346">
    <property type="entry name" value="PRK04366.1"/>
    <property type="match status" value="1"/>
</dbReference>
<dbReference type="PANTHER" id="PTHR11773:SF1">
    <property type="entry name" value="GLYCINE DEHYDROGENASE (DECARBOXYLATING), MITOCHONDRIAL"/>
    <property type="match status" value="1"/>
</dbReference>
<dbReference type="PANTHER" id="PTHR11773">
    <property type="entry name" value="GLYCINE DEHYDROGENASE, DECARBOXYLATING"/>
    <property type="match status" value="1"/>
</dbReference>
<dbReference type="Pfam" id="PF21478">
    <property type="entry name" value="GcvP2_C"/>
    <property type="match status" value="1"/>
</dbReference>
<dbReference type="Pfam" id="PF02347">
    <property type="entry name" value="GDC-P"/>
    <property type="match status" value="2"/>
</dbReference>
<dbReference type="SUPFAM" id="SSF53383">
    <property type="entry name" value="PLP-dependent transferases"/>
    <property type="match status" value="2"/>
</dbReference>
<protein>
    <recommendedName>
        <fullName evidence="1">Glycine dehydrogenase (decarboxylating)</fullName>
        <ecNumber evidence="1">1.4.4.2</ecNumber>
    </recommendedName>
    <alternativeName>
        <fullName evidence="1">Glycine cleavage system P-protein</fullName>
    </alternativeName>
    <alternativeName>
        <fullName evidence="1">Glycine decarboxylase</fullName>
    </alternativeName>
    <alternativeName>
        <fullName evidence="1">Glycine dehydrogenase (aminomethyl-transferring)</fullName>
    </alternativeName>
</protein>
<evidence type="ECO:0000255" key="1">
    <source>
        <dbReference type="HAMAP-Rule" id="MF_00711"/>
    </source>
</evidence>
<accession>Q2SFI6</accession>
<comment type="function">
    <text evidence="1">The glycine cleavage system catalyzes the degradation of glycine. The P protein binds the alpha-amino group of glycine through its pyridoxal phosphate cofactor; CO(2) is released and the remaining methylamine moiety is then transferred to the lipoamide cofactor of the H protein.</text>
</comment>
<comment type="catalytic activity">
    <reaction evidence="1">
        <text>N(6)-[(R)-lipoyl]-L-lysyl-[glycine-cleavage complex H protein] + glycine + H(+) = N(6)-[(R)-S(8)-aminomethyldihydrolipoyl]-L-lysyl-[glycine-cleavage complex H protein] + CO2</text>
        <dbReference type="Rhea" id="RHEA:24304"/>
        <dbReference type="Rhea" id="RHEA-COMP:10494"/>
        <dbReference type="Rhea" id="RHEA-COMP:10495"/>
        <dbReference type="ChEBI" id="CHEBI:15378"/>
        <dbReference type="ChEBI" id="CHEBI:16526"/>
        <dbReference type="ChEBI" id="CHEBI:57305"/>
        <dbReference type="ChEBI" id="CHEBI:83099"/>
        <dbReference type="ChEBI" id="CHEBI:83143"/>
        <dbReference type="EC" id="1.4.4.2"/>
    </reaction>
</comment>
<comment type="cofactor">
    <cofactor evidence="1">
        <name>pyridoxal 5'-phosphate</name>
        <dbReference type="ChEBI" id="CHEBI:597326"/>
    </cofactor>
</comment>
<comment type="subunit">
    <text evidence="1">The glycine cleavage system is composed of four proteins: P, T, L and H.</text>
</comment>
<comment type="similarity">
    <text evidence="1">Belongs to the GcvP family.</text>
</comment>
<keyword id="KW-0560">Oxidoreductase</keyword>
<keyword id="KW-0663">Pyridoxal phosphate</keyword>
<keyword id="KW-1185">Reference proteome</keyword>
<reference key="1">
    <citation type="journal article" date="2005" name="Nucleic Acids Res.">
        <title>Genomic blueprint of Hahella chejuensis, a marine microbe producing an algicidal agent.</title>
        <authorList>
            <person name="Jeong H."/>
            <person name="Yim J.H."/>
            <person name="Lee C."/>
            <person name="Choi S.-H."/>
            <person name="Park Y.K."/>
            <person name="Yoon S.H."/>
            <person name="Hur C.-G."/>
            <person name="Kang H.-Y."/>
            <person name="Kim D."/>
            <person name="Lee H.H."/>
            <person name="Park K.H."/>
            <person name="Park S.-H."/>
            <person name="Park H.-S."/>
            <person name="Lee H.K."/>
            <person name="Oh T.K."/>
            <person name="Kim J.F."/>
        </authorList>
    </citation>
    <scope>NUCLEOTIDE SEQUENCE [LARGE SCALE GENOMIC DNA]</scope>
    <source>
        <strain>KCTC 2396</strain>
    </source>
</reference>
<name>GCSP_HAHCH</name>
<organism>
    <name type="scientific">Hahella chejuensis (strain KCTC 2396)</name>
    <dbReference type="NCBI Taxonomy" id="349521"/>
    <lineage>
        <taxon>Bacteria</taxon>
        <taxon>Pseudomonadati</taxon>
        <taxon>Pseudomonadota</taxon>
        <taxon>Gammaproteobacteria</taxon>
        <taxon>Oceanospirillales</taxon>
        <taxon>Hahellaceae</taxon>
        <taxon>Hahella</taxon>
    </lineage>
</organism>
<gene>
    <name evidence="1" type="primary">gcvP</name>
    <name type="ordered locus">HCH_03861</name>
</gene>